<sequence length="1302" mass="144977">MDITESEFTIFEVTPDPNELNNKRIKEIKGGKVNIKELFRYAGVFEIILLIIGIIGSIGVGCLNPLLMILTGDVVDTFVNGENFSKEGGSIKITTEEMNYEIMNSISDTINKLVLKMLYFAIGNMVAGFLQTICFFVLSEYQGIKIRSLYFKALLRQDPGWFDCHKTGELTSKIINDIQKIQDGMSLKFGRLFQTFSSFITGYLIGFIKCWDLTLVVLCMFPFIMVSMMGLGMSAGIFTMKSHKPFSEACSIAEQTIGNIRTVHSLTQERSFCESYNTKIMETDKYNIKKSIGIGTGLGCMMFFIMSSNALGSWYGNFVVRGKGGSDNVKAGTVLTVFMSVLLATQSLSQISTPINILNSAKVAAFNVYQTIDRIPDIDCQSIGGECPTECNGNIRFEDVQFVYPTRLSHHVLKGLDLEIKKGQTIALVGASGCGKSTTIQLIQRNYDPNGGRVTLDGKDIRELNIKWLRNQIGLVGQEPVLFAGTIRENIMLGAKEGATPSEEEMIECAKMANAHDFISKLPEGYDTIIGEKGALLSGGQKQRIAIARALIRNPSILLLDEATSALDTQSEKIVQEALEKASKGRTTIIVAHRLTTVRNADKICVFHQGEIIEQGKHQELMDLKGTYYGLVKRQSMEEEVDQETVENDLKKFREQEDKEVENISLEQTNLHNENSIVKQIKQEYKEEQKKLKHSNRFVLFRVIWNNYKHEYIFCTLGLIGGIGAGAAFPFYSLNFVDLIRVLMKLHPGINLTDEQANSILRSCMIIICIGIITMISFFCYVGLFMAAGEKMIGRIRRRFYYSIMHQNVSWFDRRENMVGAVTTKLTSDPTSLQGISAERVGDIIEIMSTVGFGFGIGLYFSWKLSLCILAVFPIISFFMFINGQLNSKNAAPAKAAYEQCGVTLVEVVEAMKTVQSLGKEDYFSQKYNNDLQIPKRGIIKWGPLLSITNAITNLLTFSINAYGYYLGICFMKKTINYQQDVPNFVDEIIDTFGDIQKALMTINSATTSFAQIGNVLPDVGKAVGAAKSIYNIIDRKPSIDCYSEEGETFNDVKGEIEFKNIHFRYPTRADNEVLKGISFKAEQGKTIALVGASGCGKSTTIQLIERFYDPTSGEVLLDGHNIKDLNIHFLRNQIGLVGQEPVLFAESVIDNIKRGVPEGVEVSNEQIYAAAKMANAHDFISAMPEGYNTMVGDRGSQLSGGQKQRIAIARALIRNPKVLLLDEATSALDSESEKIVQDALDKASKGRTTIVIAHRLSTIQNADKIYVIMRGKIVEQGKHQELIDLKGFYYTLAMQQFGTVN</sequence>
<protein>
    <recommendedName>
        <fullName evidence="6">Multidrug resistance protein 1</fullName>
        <ecNumber evidence="1">7.6.2.2</ecNumber>
    </recommendedName>
    <alternativeName>
        <fullName evidence="6">P-glycoprotein</fullName>
    </alternativeName>
</protein>
<organism evidence="8">
    <name type="scientific">Entamoeba histolytica (strain ATCC 30459 / HM-1:IMSS / ABRM)</name>
    <dbReference type="NCBI Taxonomy" id="294381"/>
    <lineage>
        <taxon>Eukaryota</taxon>
        <taxon>Amoebozoa</taxon>
        <taxon>Evosea</taxon>
        <taxon>Archamoebae</taxon>
        <taxon>Mastigamoebida</taxon>
        <taxon>Entamoebidae</taxon>
        <taxon>Entamoeba</taxon>
    </lineage>
</organism>
<accession>P16875</accession>
<accession>A0A175JRS0</accession>
<accession>C4M422</accession>
<name>MDR1_ENTH1</name>
<proteinExistence type="inferred from homology"/>
<reference evidence="9" key="1">
    <citation type="journal article" date="2005" name="Nature">
        <title>The genome of the protist parasite Entamoeba histolytica.</title>
        <authorList>
            <person name="Loftus B.J."/>
            <person name="Anderson I."/>
            <person name="Davies R."/>
            <person name="Alsmark U.C."/>
            <person name="Samuelson J."/>
            <person name="Amedeo P."/>
            <person name="Roncaglia P."/>
            <person name="Berriman M."/>
            <person name="Hirt R.P."/>
            <person name="Mann B.J."/>
            <person name="Nozaki T."/>
            <person name="Suh B."/>
            <person name="Pop M."/>
            <person name="Duchene M."/>
            <person name="Ackers J."/>
            <person name="Tannich E."/>
            <person name="Leippe M."/>
            <person name="Hofer M."/>
            <person name="Bruchhaus I."/>
            <person name="Willhoeft U."/>
            <person name="Bhattacharya A."/>
            <person name="Chillingworth T."/>
            <person name="Churcher C.M."/>
            <person name="Hance Z."/>
            <person name="Harris B."/>
            <person name="Harris D."/>
            <person name="Jagels K."/>
            <person name="Moule S."/>
            <person name="Mungall K.L."/>
            <person name="Ormond D."/>
            <person name="Squares R."/>
            <person name="Whitehead S."/>
            <person name="Quail M.A."/>
            <person name="Rabbinowitsch E."/>
            <person name="Norbertczak H."/>
            <person name="Price C."/>
            <person name="Wang Z."/>
            <person name="Guillen N."/>
            <person name="Gilchrist C."/>
            <person name="Stroup S.E."/>
            <person name="Bhattacharya S."/>
            <person name="Lohia A."/>
            <person name="Foster P.G."/>
            <person name="Sicheritz-Ponten T."/>
            <person name="Weber C."/>
            <person name="Singh U."/>
            <person name="Mukherjee C."/>
            <person name="El-Sayed N.M.A."/>
            <person name="Petri W.A."/>
            <person name="Clark C.G."/>
            <person name="Embley T.M."/>
            <person name="Barrell B.G."/>
            <person name="Fraser C.M."/>
            <person name="Hall N."/>
        </authorList>
    </citation>
    <scope>NUCLEOTIDE SEQUENCE [LARGE SCALE GENOMIC DNA]</scope>
    <source>
        <strain evidence="9">ATCC 30459 / HM-1:IMSS / ABRM</strain>
    </source>
</reference>
<reference evidence="8" key="2">
    <citation type="journal article" date="1990" name="Mol. Biochem. Parasitol.">
        <title>Emetine-resistant mutants of Entamoeba histolytica overexpress mRNAs for multidrug resistance.</title>
        <authorList>
            <person name="Samuelson J."/>
            <person name="Ayala P."/>
            <person name="Orozco E."/>
            <person name="Wirth D."/>
        </authorList>
    </citation>
    <scope>NUCLEOTIDE SEQUENCE [GENOMIC DNA] OF 436-546</scope>
    <source>
        <strain evidence="8">ATCC 30459 / HM-1:IMSS / ABRM</strain>
    </source>
</reference>
<comment type="function">
    <text evidence="1">Energy-dependent efflux pump responsible for decreased drug accumulation in multidrug resistance parasites.</text>
</comment>
<comment type="catalytic activity">
    <reaction evidence="1">
        <text>ATP + H2O + xenobioticSide 1 = ADP + phosphate + xenobioticSide 2.</text>
        <dbReference type="EC" id="7.6.2.2"/>
    </reaction>
</comment>
<comment type="subcellular location">
    <subcellularLocation>
        <location evidence="2">Membrane</location>
        <topology evidence="2">Multi-pass membrane protein</topology>
    </subcellularLocation>
</comment>
<comment type="similarity">
    <text evidence="7">Belongs to the ABC transporter superfamily. ABCB family. Multidrug resistance exporter (TC 3.A.1.201) subfamily.</text>
</comment>
<feature type="chain" id="PRO_0000093372" description="Multidrug resistance protein 1">
    <location>
        <begin position="1"/>
        <end position="1302"/>
    </location>
</feature>
<feature type="transmembrane region" description="Helical" evidence="4">
    <location>
        <begin position="43"/>
        <end position="63"/>
    </location>
</feature>
<feature type="transmembrane region" description="Helical" evidence="4">
    <location>
        <begin position="118"/>
        <end position="138"/>
    </location>
</feature>
<feature type="transmembrane region" description="Helical" evidence="4">
    <location>
        <begin position="192"/>
        <end position="212"/>
    </location>
</feature>
<feature type="transmembrane region" description="Helical" evidence="4">
    <location>
        <begin position="213"/>
        <end position="233"/>
    </location>
</feature>
<feature type="transmembrane region" description="Helical" evidence="4">
    <location>
        <begin position="292"/>
        <end position="312"/>
    </location>
</feature>
<feature type="transmembrane region" description="Helical" evidence="4">
    <location>
        <begin position="331"/>
        <end position="351"/>
    </location>
</feature>
<feature type="transmembrane region" description="Helical" evidence="4">
    <location>
        <begin position="712"/>
        <end position="732"/>
    </location>
</feature>
<feature type="transmembrane region" description="Helical" evidence="4">
    <location>
        <begin position="765"/>
        <end position="785"/>
    </location>
</feature>
<feature type="transmembrane region" description="Helical" evidence="4">
    <location>
        <begin position="841"/>
        <end position="861"/>
    </location>
</feature>
<feature type="transmembrane region" description="Helical" evidence="4">
    <location>
        <begin position="862"/>
        <end position="882"/>
    </location>
</feature>
<feature type="domain" description="ABC transmembrane type-1 1" evidence="4">
    <location>
        <begin position="51"/>
        <end position="360"/>
    </location>
</feature>
<feature type="domain" description="ABC transporter 1" evidence="3">
    <location>
        <begin position="395"/>
        <end position="634"/>
    </location>
</feature>
<feature type="domain" description="ABC transmembrane type-1 2" evidence="4">
    <location>
        <begin position="713"/>
        <end position="1022"/>
    </location>
</feature>
<feature type="domain" description="ABC transporter 2" evidence="3">
    <location>
        <begin position="1057"/>
        <end position="1296"/>
    </location>
</feature>
<feature type="binding site" evidence="3">
    <location>
        <begin position="430"/>
        <end position="437"/>
    </location>
    <ligand>
        <name>ATP</name>
        <dbReference type="ChEBI" id="CHEBI:30616"/>
    </ligand>
</feature>
<feature type="binding site" evidence="3">
    <location>
        <begin position="1092"/>
        <end position="1099"/>
    </location>
    <ligand>
        <name>ATP</name>
        <dbReference type="ChEBI" id="CHEBI:30616"/>
    </ligand>
</feature>
<feature type="glycosylation site" description="N-linked (GlcNAc...) asparagine" evidence="5">
    <location>
        <position position="83"/>
    </location>
</feature>
<feature type="glycosylation site" description="N-linked (GlcNAc...) asparagine" evidence="5">
    <location>
        <position position="663"/>
    </location>
</feature>
<feature type="glycosylation site" description="N-linked (GlcNAc...) asparagine" evidence="5">
    <location>
        <position position="751"/>
    </location>
</feature>
<feature type="glycosylation site" description="N-linked (GlcNAc...) asparagine" evidence="5">
    <location>
        <position position="808"/>
    </location>
</feature>
<feature type="sequence conflict" description="In Ref. 2; AAA29107." evidence="7" ref="2">
    <original>D</original>
    <variation>E</variation>
    <location>
        <position position="448"/>
    </location>
</feature>
<feature type="sequence conflict" description="In Ref. 2; AAA29107." evidence="7" ref="2">
    <original>ATPSEE</original>
    <variation>ETLSKD</variation>
    <location>
        <begin position="499"/>
        <end position="504"/>
    </location>
</feature>
<feature type="sequence conflict" description="In Ref. 2; AAA29107." evidence="7" ref="2">
    <original>DFISKLP</original>
    <variation>EFVSKLA</variation>
    <location>
        <begin position="517"/>
        <end position="523"/>
    </location>
</feature>
<feature type="sequence conflict" description="In Ref. 2; AAA29107." evidence="7" ref="2">
    <original>I</original>
    <variation>L</variation>
    <location>
        <position position="529"/>
    </location>
</feature>
<feature type="sequence conflict" description="In Ref. 2; AAA29107." evidence="7" ref="2">
    <original>K</original>
    <variation>R</variation>
    <location>
        <position position="542"/>
    </location>
</feature>
<gene>
    <name evidence="6" type="primary">MDR1</name>
</gene>
<keyword id="KW-0067">ATP-binding</keyword>
<keyword id="KW-0325">Glycoprotein</keyword>
<keyword id="KW-0472">Membrane</keyword>
<keyword id="KW-0547">Nucleotide-binding</keyword>
<keyword id="KW-1185">Reference proteome</keyword>
<keyword id="KW-0677">Repeat</keyword>
<keyword id="KW-1278">Translocase</keyword>
<keyword id="KW-0812">Transmembrane</keyword>
<keyword id="KW-1133">Transmembrane helix</keyword>
<keyword id="KW-0813">Transport</keyword>
<evidence type="ECO:0000250" key="1">
    <source>
        <dbReference type="UniProtKB" id="P08183"/>
    </source>
</evidence>
<evidence type="ECO:0000255" key="2"/>
<evidence type="ECO:0000255" key="3">
    <source>
        <dbReference type="PROSITE-ProRule" id="PRU00434"/>
    </source>
</evidence>
<evidence type="ECO:0000255" key="4">
    <source>
        <dbReference type="PROSITE-ProRule" id="PRU00441"/>
    </source>
</evidence>
<evidence type="ECO:0000255" key="5">
    <source>
        <dbReference type="PROSITE-ProRule" id="PRU00498"/>
    </source>
</evidence>
<evidence type="ECO:0000303" key="6">
    <source>
    </source>
</evidence>
<evidence type="ECO:0000305" key="7"/>
<evidence type="ECO:0000312" key="8">
    <source>
        <dbReference type="EMBL" id="AAA29107.1"/>
    </source>
</evidence>
<evidence type="ECO:0000312" key="9">
    <source>
        <dbReference type="EMBL" id="EAL46378.1"/>
    </source>
</evidence>
<dbReference type="EC" id="7.6.2.2" evidence="1"/>
<dbReference type="EMBL" id="DS571251">
    <property type="protein sequence ID" value="EAL46378.1"/>
    <property type="molecule type" value="Genomic_DNA"/>
</dbReference>
<dbReference type="EMBL" id="M29058">
    <property type="protein sequence ID" value="AAA29107.1"/>
    <property type="molecule type" value="Genomic_DNA"/>
</dbReference>
<dbReference type="PIR" id="A44970">
    <property type="entry name" value="A44970"/>
</dbReference>
<dbReference type="RefSeq" id="XP_651764.1">
    <property type="nucleotide sequence ID" value="XM_646672.1"/>
</dbReference>
<dbReference type="SMR" id="P16875"/>
<dbReference type="STRING" id="5759.C4M422"/>
<dbReference type="EnsemblProtists" id="GAT96094">
    <property type="protein sequence ID" value="GAT96094"/>
    <property type="gene ID" value="CL6EHI_114150"/>
</dbReference>
<dbReference type="EnsemblProtists" id="rna_EHI_114150-1">
    <property type="protein sequence ID" value="rna_EHI_114150-1"/>
    <property type="gene ID" value="EHI_114150"/>
</dbReference>
<dbReference type="KEGG" id="ehi:EHI_114150"/>
<dbReference type="VEuPathDB" id="AmoebaDB:EHI5A_034220"/>
<dbReference type="VEuPathDB" id="AmoebaDB:EHI5A_181390"/>
<dbReference type="VEuPathDB" id="AmoebaDB:EHI5A_262080"/>
<dbReference type="VEuPathDB" id="AmoebaDB:EHI5A_265730"/>
<dbReference type="VEuPathDB" id="AmoebaDB:EHI7A_016780"/>
<dbReference type="VEuPathDB" id="AmoebaDB:EHI7A_038990"/>
<dbReference type="VEuPathDB" id="AmoebaDB:EHI8A_033300"/>
<dbReference type="VEuPathDB" id="AmoebaDB:EHI8A_112300"/>
<dbReference type="VEuPathDB" id="AmoebaDB:EHI8A_150200"/>
<dbReference type="VEuPathDB" id="AmoebaDB:EHI_114150"/>
<dbReference type="VEuPathDB" id="AmoebaDB:EHI_125030"/>
<dbReference type="VEuPathDB" id="AmoebaDB:KM1_039390"/>
<dbReference type="VEuPathDB" id="AmoebaDB:KM1_039600"/>
<dbReference type="VEuPathDB" id="AmoebaDB:KM1_243070"/>
<dbReference type="VEuPathDB" id="AmoebaDB:KM1_312220"/>
<dbReference type="eggNOG" id="KOG0055">
    <property type="taxonomic scope" value="Eukaryota"/>
</dbReference>
<dbReference type="HOGENOM" id="CLU_000604_17_2_1"/>
<dbReference type="OMA" id="IGMAAPY"/>
<dbReference type="OrthoDB" id="6500128at2759"/>
<dbReference type="Proteomes" id="UP000001926">
    <property type="component" value="Partially assembled WGS sequence"/>
</dbReference>
<dbReference type="GO" id="GO:0016020">
    <property type="term" value="C:membrane"/>
    <property type="evidence" value="ECO:0000318"/>
    <property type="project" value="GO_Central"/>
</dbReference>
<dbReference type="GO" id="GO:0140359">
    <property type="term" value="F:ABC-type transporter activity"/>
    <property type="evidence" value="ECO:0007669"/>
    <property type="project" value="InterPro"/>
</dbReference>
<dbReference type="GO" id="GO:0005524">
    <property type="term" value="F:ATP binding"/>
    <property type="evidence" value="ECO:0007669"/>
    <property type="project" value="UniProtKB-KW"/>
</dbReference>
<dbReference type="GO" id="GO:0016887">
    <property type="term" value="F:ATP hydrolysis activity"/>
    <property type="evidence" value="ECO:0007669"/>
    <property type="project" value="InterPro"/>
</dbReference>
<dbReference type="GO" id="GO:0042626">
    <property type="term" value="F:ATPase-coupled transmembrane transporter activity"/>
    <property type="evidence" value="ECO:0000318"/>
    <property type="project" value="GO_Central"/>
</dbReference>
<dbReference type="GO" id="GO:0055085">
    <property type="term" value="P:transmembrane transport"/>
    <property type="evidence" value="ECO:0000318"/>
    <property type="project" value="GO_Central"/>
</dbReference>
<dbReference type="CDD" id="cd18577">
    <property type="entry name" value="ABC_6TM_Pgp_ABCB1_D1_like"/>
    <property type="match status" value="1"/>
</dbReference>
<dbReference type="CDD" id="cd18578">
    <property type="entry name" value="ABC_6TM_Pgp_ABCB1_D2_like"/>
    <property type="match status" value="1"/>
</dbReference>
<dbReference type="CDD" id="cd03249">
    <property type="entry name" value="ABC_MTABC3_MDL1_MDL2"/>
    <property type="match status" value="2"/>
</dbReference>
<dbReference type="FunFam" id="3.40.50.300:FF:000916">
    <property type="entry name" value="ABC transporter B family member 9"/>
    <property type="match status" value="1"/>
</dbReference>
<dbReference type="FunFam" id="1.20.1560.10:FF:000163">
    <property type="entry name" value="ABC transporter B family protein"/>
    <property type="match status" value="1"/>
</dbReference>
<dbReference type="FunFam" id="1.20.1560.10:FF:000018">
    <property type="entry name" value="ATP-binding cassette subfamily B member 11"/>
    <property type="match status" value="1"/>
</dbReference>
<dbReference type="FunFam" id="3.40.50.300:FF:000302">
    <property type="entry name" value="ATP-binding cassette subfamily B member 5"/>
    <property type="match status" value="1"/>
</dbReference>
<dbReference type="Gene3D" id="1.20.1560.10">
    <property type="entry name" value="ABC transporter type 1, transmembrane domain"/>
    <property type="match status" value="2"/>
</dbReference>
<dbReference type="Gene3D" id="3.40.50.300">
    <property type="entry name" value="P-loop containing nucleotide triphosphate hydrolases"/>
    <property type="match status" value="2"/>
</dbReference>
<dbReference type="InterPro" id="IPR003593">
    <property type="entry name" value="AAA+_ATPase"/>
</dbReference>
<dbReference type="InterPro" id="IPR011527">
    <property type="entry name" value="ABC1_TM_dom"/>
</dbReference>
<dbReference type="InterPro" id="IPR036640">
    <property type="entry name" value="ABC1_TM_sf"/>
</dbReference>
<dbReference type="InterPro" id="IPR003439">
    <property type="entry name" value="ABC_transporter-like_ATP-bd"/>
</dbReference>
<dbReference type="InterPro" id="IPR017871">
    <property type="entry name" value="ABC_transporter-like_CS"/>
</dbReference>
<dbReference type="InterPro" id="IPR027417">
    <property type="entry name" value="P-loop_NTPase"/>
</dbReference>
<dbReference type="InterPro" id="IPR039421">
    <property type="entry name" value="Type_1_exporter"/>
</dbReference>
<dbReference type="PANTHER" id="PTHR43394">
    <property type="entry name" value="ATP-DEPENDENT PERMEASE MDL1, MITOCHONDRIAL"/>
    <property type="match status" value="1"/>
</dbReference>
<dbReference type="PANTHER" id="PTHR43394:SF27">
    <property type="entry name" value="ATP-DEPENDENT TRANSLOCASE ABCB1-LIKE"/>
    <property type="match status" value="1"/>
</dbReference>
<dbReference type="Pfam" id="PF00664">
    <property type="entry name" value="ABC_membrane"/>
    <property type="match status" value="2"/>
</dbReference>
<dbReference type="Pfam" id="PF00005">
    <property type="entry name" value="ABC_tran"/>
    <property type="match status" value="2"/>
</dbReference>
<dbReference type="SMART" id="SM00382">
    <property type="entry name" value="AAA"/>
    <property type="match status" value="2"/>
</dbReference>
<dbReference type="SUPFAM" id="SSF90123">
    <property type="entry name" value="ABC transporter transmembrane region"/>
    <property type="match status" value="2"/>
</dbReference>
<dbReference type="SUPFAM" id="SSF52540">
    <property type="entry name" value="P-loop containing nucleoside triphosphate hydrolases"/>
    <property type="match status" value="2"/>
</dbReference>
<dbReference type="PROSITE" id="PS50929">
    <property type="entry name" value="ABC_TM1F"/>
    <property type="match status" value="2"/>
</dbReference>
<dbReference type="PROSITE" id="PS00211">
    <property type="entry name" value="ABC_TRANSPORTER_1"/>
    <property type="match status" value="2"/>
</dbReference>
<dbReference type="PROSITE" id="PS50893">
    <property type="entry name" value="ABC_TRANSPORTER_2"/>
    <property type="match status" value="2"/>
</dbReference>